<sequence length="334" mass="37404">MAEVRPAADDFESLEPSIKNIVEQDSLKWIFVGGKGGVGKTTCSCSIAVQLALTRRSVLIISTDPAHNISDAFDQKFSKVPTLVKGFQNLYAMEIDPNLGFSNLPEDYFEGPDMMSMGKAMISELLGAFPGIDEAMSFAEVMRLVNSMDFSTVIFDTAPTGHTLRLLSFPSVIEKSLGKILSLKNSISPFISQFGSLLGMQDLNADQMTSKLEETLPVIKQVSAQFKNPDHTTFVCVCIAEFLSLYETERLIQELTKSEIDTHNIIVNQLVFPSKREECNLCEARYRIQHKYLDQIQDLYEDFHVTRLPLLTHEVRGVDKILNFSSNLVTPYKP</sequence>
<proteinExistence type="inferred from homology"/>
<reference key="1">
    <citation type="journal article" date="2007" name="Science">
        <title>Sea anemone genome reveals ancestral eumetazoan gene repertoire and genomic organization.</title>
        <authorList>
            <person name="Putnam N.H."/>
            <person name="Srivastava M."/>
            <person name="Hellsten U."/>
            <person name="Dirks B."/>
            <person name="Chapman J."/>
            <person name="Salamov A."/>
            <person name="Terry A."/>
            <person name="Shapiro H."/>
            <person name="Lindquist E."/>
            <person name="Kapitonov V.V."/>
            <person name="Jurka J."/>
            <person name="Genikhovich G."/>
            <person name="Grigoriev I.V."/>
            <person name="Lucas S.M."/>
            <person name="Steele R.E."/>
            <person name="Finnerty J.R."/>
            <person name="Technau U."/>
            <person name="Martindale M.Q."/>
            <person name="Rokhsar D.S."/>
        </authorList>
    </citation>
    <scope>NUCLEOTIDE SEQUENCE [LARGE SCALE GENOMIC DNA]</scope>
    <source>
        <strain>CH2 X CH6</strain>
    </source>
</reference>
<protein>
    <recommendedName>
        <fullName evidence="1">ATPase ASNA1 homolog</fullName>
        <ecNumber evidence="1">3.6.-.-</ecNumber>
    </recommendedName>
    <alternativeName>
        <fullName evidence="1">Arsenical pump-driving ATPase homolog</fullName>
    </alternativeName>
    <alternativeName>
        <fullName evidence="1">Arsenite-stimulated ATPase</fullName>
    </alternativeName>
</protein>
<name>ASNA_NEMVE</name>
<evidence type="ECO:0000255" key="1">
    <source>
        <dbReference type="HAMAP-Rule" id="MF_03112"/>
    </source>
</evidence>
<dbReference type="EC" id="3.6.-.-" evidence="1"/>
<dbReference type="EMBL" id="DS469529">
    <property type="protein sequence ID" value="EDO46191.1"/>
    <property type="molecule type" value="Genomic_DNA"/>
</dbReference>
<dbReference type="RefSeq" id="XP_001638254.1">
    <property type="nucleotide sequence ID" value="XM_001638204.1"/>
</dbReference>
<dbReference type="SMR" id="A7RQM5"/>
<dbReference type="STRING" id="45351.A7RQM5"/>
<dbReference type="EnsemblMetazoa" id="EDO46191">
    <property type="protein sequence ID" value="EDO46191"/>
    <property type="gene ID" value="NEMVEDRAFT_v1g161623"/>
</dbReference>
<dbReference type="eggNOG" id="KOG2825">
    <property type="taxonomic scope" value="Eukaryota"/>
</dbReference>
<dbReference type="HOGENOM" id="CLU_040761_0_0_1"/>
<dbReference type="InParanoid" id="A7RQM5"/>
<dbReference type="OMA" id="MDAPYEF"/>
<dbReference type="PhylomeDB" id="A7RQM5"/>
<dbReference type="Proteomes" id="UP000001593">
    <property type="component" value="Unassembled WGS sequence"/>
</dbReference>
<dbReference type="GO" id="GO:0043529">
    <property type="term" value="C:GET complex"/>
    <property type="evidence" value="ECO:0000318"/>
    <property type="project" value="GO_Central"/>
</dbReference>
<dbReference type="GO" id="GO:0005524">
    <property type="term" value="F:ATP binding"/>
    <property type="evidence" value="ECO:0007669"/>
    <property type="project" value="UniProtKB-UniRule"/>
</dbReference>
<dbReference type="GO" id="GO:0016887">
    <property type="term" value="F:ATP hydrolysis activity"/>
    <property type="evidence" value="ECO:0000318"/>
    <property type="project" value="GO_Central"/>
</dbReference>
<dbReference type="GO" id="GO:0046872">
    <property type="term" value="F:metal ion binding"/>
    <property type="evidence" value="ECO:0007669"/>
    <property type="project" value="UniProtKB-KW"/>
</dbReference>
<dbReference type="GO" id="GO:0071816">
    <property type="term" value="P:tail-anchored membrane protein insertion into ER membrane"/>
    <property type="evidence" value="ECO:0000318"/>
    <property type="project" value="GO_Central"/>
</dbReference>
<dbReference type="CDD" id="cd02035">
    <property type="entry name" value="ArsA"/>
    <property type="match status" value="1"/>
</dbReference>
<dbReference type="FunFam" id="3.40.50.300:FF:000235">
    <property type="entry name" value="ATPase ASNA1"/>
    <property type="match status" value="1"/>
</dbReference>
<dbReference type="Gene3D" id="3.40.50.300">
    <property type="entry name" value="P-loop containing nucleotide triphosphate hydrolases"/>
    <property type="match status" value="1"/>
</dbReference>
<dbReference type="HAMAP" id="MF_03112">
    <property type="entry name" value="Asna1_Get3"/>
    <property type="match status" value="1"/>
</dbReference>
<dbReference type="InterPro" id="IPR025723">
    <property type="entry name" value="Anion-transp_ATPase-like_dom"/>
</dbReference>
<dbReference type="InterPro" id="IPR016300">
    <property type="entry name" value="ATPase_ArsA/GET3"/>
</dbReference>
<dbReference type="InterPro" id="IPR027542">
    <property type="entry name" value="ATPase_ArsA/GET3_euk"/>
</dbReference>
<dbReference type="InterPro" id="IPR027417">
    <property type="entry name" value="P-loop_NTPase"/>
</dbReference>
<dbReference type="NCBIfam" id="TIGR00345">
    <property type="entry name" value="GET3_arsA_TRC40"/>
    <property type="match status" value="1"/>
</dbReference>
<dbReference type="PANTHER" id="PTHR10803">
    <property type="entry name" value="ARSENICAL PUMP-DRIVING ATPASE ARSENITE-TRANSLOCATING ATPASE"/>
    <property type="match status" value="1"/>
</dbReference>
<dbReference type="PANTHER" id="PTHR10803:SF3">
    <property type="entry name" value="ATPASE GET3"/>
    <property type="match status" value="1"/>
</dbReference>
<dbReference type="Pfam" id="PF02374">
    <property type="entry name" value="ArsA_ATPase"/>
    <property type="match status" value="1"/>
</dbReference>
<dbReference type="SUPFAM" id="SSF52540">
    <property type="entry name" value="P-loop containing nucleoside triphosphate hydrolases"/>
    <property type="match status" value="1"/>
</dbReference>
<organism>
    <name type="scientific">Nematostella vectensis</name>
    <name type="common">Starlet sea anemone</name>
    <dbReference type="NCBI Taxonomy" id="45351"/>
    <lineage>
        <taxon>Eukaryota</taxon>
        <taxon>Metazoa</taxon>
        <taxon>Cnidaria</taxon>
        <taxon>Anthozoa</taxon>
        <taxon>Hexacorallia</taxon>
        <taxon>Actiniaria</taxon>
        <taxon>Edwardsiidae</taxon>
        <taxon>Nematostella</taxon>
    </lineage>
</organism>
<comment type="function">
    <text evidence="1">ATPase required for the post-translational delivery of tail-anchored (TA) proteins to the endoplasmic reticulum. Recognizes and selectively binds the transmembrane domain of TA proteins in the cytosol. This complex then targets to the endoplasmic reticulum by membrane-bound receptors, where the tail-anchored protein is released for insertion. This process is regulated by ATP binding and hydrolysis. ATP binding drives the homodimer towards the closed dimer state, facilitating recognition of newly synthesized TA membrane proteins. ATP hydrolysis is required for insertion. Subsequently, the homodimer reverts towards the open dimer state, lowering its affinity for the membrane-bound receptor, and returning it to the cytosol to initiate a new round of targeting.</text>
</comment>
<comment type="subunit">
    <text evidence="1">Homodimer.</text>
</comment>
<comment type="subcellular location">
    <subcellularLocation>
        <location evidence="1">Cytoplasm</location>
    </subcellularLocation>
    <subcellularLocation>
        <location evidence="1">Endoplasmic reticulum</location>
    </subcellularLocation>
</comment>
<comment type="similarity">
    <text evidence="1">Belongs to the arsA ATPase family.</text>
</comment>
<accession>A7RQM5</accession>
<gene>
    <name type="ORF">v1g161623</name>
</gene>
<feature type="chain" id="PRO_0000388160" description="ATPase ASNA1 homolog">
    <location>
        <begin position="1"/>
        <end position="334"/>
    </location>
</feature>
<feature type="active site" evidence="1">
    <location>
        <position position="64"/>
    </location>
</feature>
<feature type="binding site" evidence="1">
    <location>
        <begin position="35"/>
        <end position="42"/>
    </location>
    <ligand>
        <name>ATP</name>
        <dbReference type="ChEBI" id="CHEBI:30616"/>
    </ligand>
</feature>
<feature type="binding site" evidence="1">
    <location>
        <position position="241"/>
    </location>
    <ligand>
        <name>ATP</name>
        <dbReference type="ChEBI" id="CHEBI:30616"/>
    </ligand>
</feature>
<feature type="binding site" evidence="1">
    <location>
        <position position="268"/>
    </location>
    <ligand>
        <name>ATP</name>
        <dbReference type="ChEBI" id="CHEBI:30616"/>
    </ligand>
</feature>
<feature type="binding site" evidence="1">
    <location>
        <position position="279"/>
    </location>
    <ligand>
        <name>Zn(2+)</name>
        <dbReference type="ChEBI" id="CHEBI:29105"/>
        <note>ligand shared between dimeric partners</note>
    </ligand>
</feature>
<feature type="binding site" evidence="1">
    <location>
        <position position="282"/>
    </location>
    <ligand>
        <name>Zn(2+)</name>
        <dbReference type="ChEBI" id="CHEBI:29105"/>
        <note>ligand shared between dimeric partners</note>
    </ligand>
</feature>
<keyword id="KW-0067">ATP-binding</keyword>
<keyword id="KW-0963">Cytoplasm</keyword>
<keyword id="KW-0256">Endoplasmic reticulum</keyword>
<keyword id="KW-0378">Hydrolase</keyword>
<keyword id="KW-0479">Metal-binding</keyword>
<keyword id="KW-0547">Nucleotide-binding</keyword>
<keyword id="KW-1185">Reference proteome</keyword>
<keyword id="KW-0813">Transport</keyword>
<keyword id="KW-0862">Zinc</keyword>